<protein>
    <recommendedName>
        <fullName>Taste receptor type 2 member 114</fullName>
        <shortName>T2R114</shortName>
    </recommendedName>
    <alternativeName>
        <fullName>Taste receptor type 2 member 5</fullName>
        <shortName>T2R5</shortName>
    </alternativeName>
</protein>
<sequence length="309" mass="35604">MLGAMEGVLLSVATSEALLGIVGNTFIALVNCMDCTRNKNLYNIGFILTGLAISRICLVWILITEAYIKIFSPQLLSPINIIELISYLWIITSQLNVWFATSLSIFYFLKIANFSHHIFLWLKRRINIVFAFLIGCLLMSWLFSFPVVVKMVKDKKMLYINSSWQIHMKKSELIINYVFTNGGVFLLFIIMLIVCFLLIISLWRHSKWMQSNESGFRDLNTEVHVKTIKVLLSFIILFILHLIGITINVICLLVPENNLLFVFGLTIAFLYPCCHSLILILANSRLKRCFVRILQQLMCSEEGKEFRNT</sequence>
<comment type="function">
    <text evidence="3">Putative taste receptor which may play a role in the perception of bitterness.</text>
</comment>
<comment type="subcellular location">
    <subcellularLocation>
        <location evidence="3">Membrane</location>
        <topology evidence="3">Multi-pass membrane protein</topology>
    </subcellularLocation>
</comment>
<comment type="miscellaneous">
    <text evidence="3">Several bitter taste receptors are expressed in a single taste receptor cell.</text>
</comment>
<comment type="similarity">
    <text evidence="2">Belongs to the G-protein coupled receptor T2R family.</text>
</comment>
<accession>Q9JKT8</accession>
<reference evidence="4" key="1">
    <citation type="journal article" date="2000" name="Cell">
        <title>A novel family of mammalian taste receptors.</title>
        <authorList>
            <person name="Adler E."/>
            <person name="Hoon M.A."/>
            <person name="Mueller K.L."/>
            <person name="Chandrashekar J."/>
            <person name="Ryba N.J.P."/>
            <person name="Zuker C.S."/>
        </authorList>
    </citation>
    <scope>NUCLEOTIDE SEQUENCE [GENOMIC DNA]</scope>
</reference>
<gene>
    <name evidence="1" type="primary">Tas2r114</name>
    <name evidence="5" type="synonym">Tas2r5</name>
</gene>
<keyword id="KW-0297">G-protein coupled receptor</keyword>
<keyword id="KW-0325">Glycoprotein</keyword>
<keyword id="KW-0472">Membrane</keyword>
<keyword id="KW-0675">Receptor</keyword>
<keyword id="KW-1185">Reference proteome</keyword>
<keyword id="KW-0716">Sensory transduction</keyword>
<keyword id="KW-0919">Taste</keyword>
<keyword id="KW-0807">Transducer</keyword>
<keyword id="KW-0812">Transmembrane</keyword>
<keyword id="KW-1133">Transmembrane helix</keyword>
<evidence type="ECO:0000250" key="1">
    <source>
        <dbReference type="UniProtKB" id="Q7M722"/>
    </source>
</evidence>
<evidence type="ECO:0000255" key="2"/>
<evidence type="ECO:0000305" key="3"/>
<evidence type="ECO:0000312" key="4">
    <source>
        <dbReference type="EMBL" id="AAF43916.1"/>
    </source>
</evidence>
<evidence type="ECO:0000312" key="5">
    <source>
        <dbReference type="RGD" id="620737"/>
    </source>
</evidence>
<feature type="chain" id="PRO_0000248474" description="Taste receptor type 2 member 114">
    <location>
        <begin position="1"/>
        <end position="309"/>
    </location>
</feature>
<feature type="topological domain" description="Extracellular" evidence="2">
    <location>
        <begin position="1"/>
        <end position="7"/>
    </location>
</feature>
<feature type="transmembrane region" description="Helical; Name=1" evidence="2">
    <location>
        <begin position="8"/>
        <end position="28"/>
    </location>
</feature>
<feature type="topological domain" description="Cytoplasmic" evidence="2">
    <location>
        <begin position="29"/>
        <end position="43"/>
    </location>
</feature>
<feature type="transmembrane region" description="Helical; Name=2" evidence="2">
    <location>
        <begin position="44"/>
        <end position="64"/>
    </location>
</feature>
<feature type="topological domain" description="Extracellular" evidence="2">
    <location>
        <begin position="65"/>
        <end position="87"/>
    </location>
</feature>
<feature type="transmembrane region" description="Helical; Name=3" evidence="2">
    <location>
        <begin position="88"/>
        <end position="108"/>
    </location>
</feature>
<feature type="topological domain" description="Cytoplasmic" evidence="2">
    <location>
        <begin position="109"/>
        <end position="127"/>
    </location>
</feature>
<feature type="transmembrane region" description="Helical; Name=4" evidence="2">
    <location>
        <begin position="128"/>
        <end position="148"/>
    </location>
</feature>
<feature type="topological domain" description="Extracellular" evidence="2">
    <location>
        <begin position="149"/>
        <end position="182"/>
    </location>
</feature>
<feature type="transmembrane region" description="Helical; Name=5" evidence="2">
    <location>
        <begin position="183"/>
        <end position="203"/>
    </location>
</feature>
<feature type="topological domain" description="Cytoplasmic" evidence="2">
    <location>
        <begin position="204"/>
        <end position="233"/>
    </location>
</feature>
<feature type="transmembrane region" description="Helical; Name=6" evidence="2">
    <location>
        <begin position="234"/>
        <end position="254"/>
    </location>
</feature>
<feature type="topological domain" description="Extracellular" evidence="2">
    <location>
        <begin position="255"/>
        <end position="259"/>
    </location>
</feature>
<feature type="transmembrane region" description="Helical; Name=7" evidence="2">
    <location>
        <begin position="260"/>
        <end position="280"/>
    </location>
</feature>
<feature type="topological domain" description="Cytoplasmic" evidence="2">
    <location>
        <begin position="281"/>
        <end position="309"/>
    </location>
</feature>
<feature type="glycosylation site" description="N-linked (GlcNAc...) asparagine" evidence="2">
    <location>
        <position position="161"/>
    </location>
</feature>
<organism>
    <name type="scientific">Rattus norvegicus</name>
    <name type="common">Rat</name>
    <dbReference type="NCBI Taxonomy" id="10116"/>
    <lineage>
        <taxon>Eukaryota</taxon>
        <taxon>Metazoa</taxon>
        <taxon>Chordata</taxon>
        <taxon>Craniata</taxon>
        <taxon>Vertebrata</taxon>
        <taxon>Euteleostomi</taxon>
        <taxon>Mammalia</taxon>
        <taxon>Eutheria</taxon>
        <taxon>Euarchontoglires</taxon>
        <taxon>Glires</taxon>
        <taxon>Rodentia</taxon>
        <taxon>Myomorpha</taxon>
        <taxon>Muroidea</taxon>
        <taxon>Muridae</taxon>
        <taxon>Murinae</taxon>
        <taxon>Rattus</taxon>
    </lineage>
</organism>
<dbReference type="EMBL" id="AF227143">
    <property type="protein sequence ID" value="AAF43916.1"/>
    <property type="molecule type" value="mRNA"/>
</dbReference>
<dbReference type="RefSeq" id="NP_076486.1">
    <property type="nucleotide sequence ID" value="NM_023996.1"/>
</dbReference>
<dbReference type="SMR" id="Q9JKT8"/>
<dbReference type="FunCoup" id="Q9JKT8">
    <property type="interactions" value="80"/>
</dbReference>
<dbReference type="STRING" id="10116.ENSRNOP00000007497"/>
<dbReference type="GlyCosmos" id="Q9JKT8">
    <property type="glycosylation" value="1 site, No reported glycans"/>
</dbReference>
<dbReference type="GlyGen" id="Q9JKT8">
    <property type="glycosylation" value="1 site"/>
</dbReference>
<dbReference type="PhosphoSitePlus" id="Q9JKT8"/>
<dbReference type="PaxDb" id="10116-ENSRNOP00000007497"/>
<dbReference type="GeneID" id="78982"/>
<dbReference type="KEGG" id="rno:78982"/>
<dbReference type="UCSC" id="RGD:620737">
    <property type="organism name" value="rat"/>
</dbReference>
<dbReference type="AGR" id="RGD:620737"/>
<dbReference type="CTD" id="387346"/>
<dbReference type="RGD" id="620737">
    <property type="gene designation" value="Tas2r114"/>
</dbReference>
<dbReference type="eggNOG" id="ENOG502T3AX">
    <property type="taxonomic scope" value="Eukaryota"/>
</dbReference>
<dbReference type="InParanoid" id="Q9JKT8"/>
<dbReference type="OrthoDB" id="8876749at2759"/>
<dbReference type="PhylomeDB" id="Q9JKT8"/>
<dbReference type="PRO" id="PR:Q9JKT8"/>
<dbReference type="Proteomes" id="UP000002494">
    <property type="component" value="Unplaced"/>
</dbReference>
<dbReference type="GO" id="GO:0016020">
    <property type="term" value="C:membrane"/>
    <property type="evidence" value="ECO:0000318"/>
    <property type="project" value="GO_Central"/>
</dbReference>
<dbReference type="GO" id="GO:0033038">
    <property type="term" value="F:bitter taste receptor activity"/>
    <property type="evidence" value="ECO:0007669"/>
    <property type="project" value="InterPro"/>
</dbReference>
<dbReference type="GO" id="GO:0004930">
    <property type="term" value="F:G protein-coupled receptor activity"/>
    <property type="evidence" value="ECO:0007669"/>
    <property type="project" value="UniProtKB-KW"/>
</dbReference>
<dbReference type="GO" id="GO:0008527">
    <property type="term" value="F:taste receptor activity"/>
    <property type="evidence" value="ECO:0000304"/>
    <property type="project" value="UniProtKB"/>
</dbReference>
<dbReference type="CDD" id="cd15021">
    <property type="entry name" value="7tm_TAS2R10"/>
    <property type="match status" value="1"/>
</dbReference>
<dbReference type="FunFam" id="1.20.1070.10:FF:000042">
    <property type="entry name" value="Taste receptor type 2 member 7"/>
    <property type="match status" value="1"/>
</dbReference>
<dbReference type="Gene3D" id="1.20.1070.10">
    <property type="entry name" value="Rhodopsin 7-helix transmembrane proteins"/>
    <property type="match status" value="1"/>
</dbReference>
<dbReference type="InterPro" id="IPR007960">
    <property type="entry name" value="TAS2R"/>
</dbReference>
<dbReference type="PANTHER" id="PTHR11394">
    <property type="entry name" value="TASTE RECEPTOR TYPE 2"/>
    <property type="match status" value="1"/>
</dbReference>
<dbReference type="PANTHER" id="PTHR11394:SF50">
    <property type="entry name" value="TASTE RECEPTOR TYPE 2 MEMBER 114"/>
    <property type="match status" value="1"/>
</dbReference>
<dbReference type="Pfam" id="PF05296">
    <property type="entry name" value="TAS2R"/>
    <property type="match status" value="1"/>
</dbReference>
<dbReference type="SUPFAM" id="SSF81321">
    <property type="entry name" value="Family A G protein-coupled receptor-like"/>
    <property type="match status" value="1"/>
</dbReference>
<name>TR114_RAT</name>
<proteinExistence type="evidence at transcript level"/>